<reference key="1">
    <citation type="submission" date="2004-08" db="EMBL/GenBank/DDBJ databases">
        <authorList>
            <consortium name="NIH - Xenopus Gene Collection (XGC) project"/>
        </authorList>
    </citation>
    <scope>NUCLEOTIDE SEQUENCE [LARGE SCALE MRNA]</scope>
    <source>
        <tissue>Embryo</tissue>
    </source>
</reference>
<proteinExistence type="evidence at transcript level"/>
<keyword id="KW-0967">Endosome</keyword>
<keyword id="KW-0391">Immunity</keyword>
<keyword id="KW-0399">Innate immunity</keyword>
<keyword id="KW-0458">Lysosome</keyword>
<keyword id="KW-0472">Membrane</keyword>
<keyword id="KW-0571">Peptide transport</keyword>
<keyword id="KW-0597">Phosphoprotein</keyword>
<keyword id="KW-0653">Protein transport</keyword>
<keyword id="KW-1185">Reference proteome</keyword>
<keyword id="KW-0769">Symport</keyword>
<keyword id="KW-0812">Transmembrane</keyword>
<keyword id="KW-1133">Transmembrane helix</keyword>
<keyword id="KW-0813">Transport</keyword>
<feature type="chain" id="PRO_0000338602" description="Solute carrier family 15 member 4">
    <location>
        <begin position="1"/>
        <end position="569"/>
    </location>
</feature>
<feature type="transmembrane region" description="Helical" evidence="4">
    <location>
        <begin position="46"/>
        <end position="66"/>
    </location>
</feature>
<feature type="transmembrane region" description="Helical" evidence="4">
    <location>
        <begin position="73"/>
        <end position="93"/>
    </location>
</feature>
<feature type="transmembrane region" description="Helical" evidence="4">
    <location>
        <begin position="100"/>
        <end position="120"/>
    </location>
</feature>
<feature type="transmembrane region" description="Helical" evidence="4">
    <location>
        <begin position="160"/>
        <end position="180"/>
    </location>
</feature>
<feature type="transmembrane region" description="Helical" evidence="4">
    <location>
        <begin position="201"/>
        <end position="221"/>
    </location>
</feature>
<feature type="transmembrane region" description="Helical" evidence="4">
    <location>
        <begin position="229"/>
        <end position="249"/>
    </location>
</feature>
<feature type="transmembrane region" description="Helical" evidence="4">
    <location>
        <begin position="322"/>
        <end position="342"/>
    </location>
</feature>
<feature type="transmembrane region" description="Helical" evidence="4">
    <location>
        <begin position="364"/>
        <end position="384"/>
    </location>
</feature>
<feature type="transmembrane region" description="Helical" evidence="4">
    <location>
        <begin position="406"/>
        <end position="426"/>
    </location>
</feature>
<feature type="transmembrane region" description="Helical" evidence="4">
    <location>
        <begin position="460"/>
        <end position="480"/>
    </location>
</feature>
<feature type="transmembrane region" description="Helical" evidence="4">
    <location>
        <begin position="488"/>
        <end position="508"/>
    </location>
</feature>
<feature type="transmembrane region" description="Helical" evidence="4">
    <location>
        <begin position="536"/>
        <end position="556"/>
    </location>
</feature>
<feature type="region of interest" description="Disordered" evidence="5">
    <location>
        <begin position="1"/>
        <end position="20"/>
    </location>
</feature>
<sequence>MASRDPSERSPLLGGRSEPPVPAGSVFSGRGLACAAVLLSELLERVAFYGITSNLVLFLNGQIFGWEGTQASQALLLFMGITYLVSPFAGWLADALLGRFYVILGSMVLYLLGMLLFPMVSYSGTRTAFCGDIQWAQIENCSRSNASSDDTCPEPSRRYCAPALFLGLIIVGLGVGSVKANITPFGADQVKDRGPEATRRFFNWFYWSINLGAIISLGGVAYVQQNVEFLIGYIIPAVCIGVSFLVFLCGKTVFVTKPADGSAFTDMVKILAYFCCSRKHTRENTRNIQNNQHRHKQSRLDMAKASHGGPFREDKVEDVKALVKIIPVFLALIPYWTVYFQMQTTYVLQSLHLRIPQIFNNNHTLPAAWLTMFDAVLILILIPLKDKLVDPFLKKRGLLPSPLKRIAVGMFFVMCSVLAAGILESERLEIVKRDKIQQQIGNVTYYAANLTVWWQLPQYILIGISEIFASIAGLEFAYSAAPKSMQSVIMGLFFFFSGIGSFVGSGLLALVSIPQIGWMSNHSDLGNINGCTLNYYFFLLAAVQAATLLLFLIISVKYERQQSKTYRRL</sequence>
<evidence type="ECO:0000250" key="1">
    <source>
        <dbReference type="UniProtKB" id="O09014"/>
    </source>
</evidence>
<evidence type="ECO:0000250" key="2">
    <source>
        <dbReference type="UniProtKB" id="Q8N697"/>
    </source>
</evidence>
<evidence type="ECO:0000250" key="3">
    <source>
        <dbReference type="UniProtKB" id="Q91W98"/>
    </source>
</evidence>
<evidence type="ECO:0000255" key="4"/>
<evidence type="ECO:0000256" key="5">
    <source>
        <dbReference type="SAM" id="MobiDB-lite"/>
    </source>
</evidence>
<evidence type="ECO:0000305" key="6"/>
<dbReference type="EMBL" id="BC079971">
    <property type="protein sequence ID" value="AAH79971.1"/>
    <property type="molecule type" value="mRNA"/>
</dbReference>
<dbReference type="RefSeq" id="NP_001087468.1">
    <property type="nucleotide sequence ID" value="NM_001093999.1"/>
</dbReference>
<dbReference type="SMR" id="Q68F72"/>
<dbReference type="DNASU" id="447292"/>
<dbReference type="GeneID" id="447292"/>
<dbReference type="KEGG" id="xla:447292"/>
<dbReference type="AGR" id="Xenbase:XB-GENE-986488"/>
<dbReference type="CTD" id="447292"/>
<dbReference type="Xenbase" id="XB-GENE-986488">
    <property type="gene designation" value="slc15a4.L"/>
</dbReference>
<dbReference type="OrthoDB" id="8904098at2759"/>
<dbReference type="Proteomes" id="UP000186698">
    <property type="component" value="Chromosome 1L"/>
</dbReference>
<dbReference type="Bgee" id="447292">
    <property type="expression patterns" value="Expressed in egg cell and 19 other cell types or tissues"/>
</dbReference>
<dbReference type="GO" id="GO:0031901">
    <property type="term" value="C:early endosome membrane"/>
    <property type="evidence" value="ECO:0007669"/>
    <property type="project" value="UniProtKB-SubCell"/>
</dbReference>
<dbReference type="GO" id="GO:0036020">
    <property type="term" value="C:endolysosome membrane"/>
    <property type="evidence" value="ECO:0000250"/>
    <property type="project" value="UniProtKB"/>
</dbReference>
<dbReference type="GO" id="GO:0005765">
    <property type="term" value="C:lysosomal membrane"/>
    <property type="evidence" value="ECO:0000250"/>
    <property type="project" value="UniProtKB"/>
</dbReference>
<dbReference type="GO" id="GO:0016020">
    <property type="term" value="C:membrane"/>
    <property type="evidence" value="ECO:0000318"/>
    <property type="project" value="GO_Central"/>
</dbReference>
<dbReference type="GO" id="GO:0071916">
    <property type="term" value="F:dipeptide transmembrane transporter activity"/>
    <property type="evidence" value="ECO:0000250"/>
    <property type="project" value="UniProtKB"/>
</dbReference>
<dbReference type="GO" id="GO:0005290">
    <property type="term" value="F:L-histidine transmembrane transporter activity"/>
    <property type="evidence" value="ECO:0000250"/>
    <property type="project" value="UniProtKB"/>
</dbReference>
<dbReference type="GO" id="GO:0015333">
    <property type="term" value="F:peptide:proton symporter activity"/>
    <property type="evidence" value="ECO:0000250"/>
    <property type="project" value="UniProtKB"/>
</dbReference>
<dbReference type="GO" id="GO:0015647">
    <property type="term" value="F:peptidoglycan transmembrane transporter activity"/>
    <property type="evidence" value="ECO:0000250"/>
    <property type="project" value="UniProtKB"/>
</dbReference>
<dbReference type="GO" id="GO:0140206">
    <property type="term" value="P:dipeptide import across plasma membrane"/>
    <property type="evidence" value="ECO:0000250"/>
    <property type="project" value="UniProtKB"/>
</dbReference>
<dbReference type="GO" id="GO:0045087">
    <property type="term" value="P:innate immune response"/>
    <property type="evidence" value="ECO:0007669"/>
    <property type="project" value="UniProtKB-KW"/>
</dbReference>
<dbReference type="GO" id="GO:0033023">
    <property type="term" value="P:mast cell homeostasis"/>
    <property type="evidence" value="ECO:0000250"/>
    <property type="project" value="UniProtKB"/>
</dbReference>
<dbReference type="GO" id="GO:0015835">
    <property type="term" value="P:peptidoglycan transport"/>
    <property type="evidence" value="ECO:0000250"/>
    <property type="project" value="UniProtKB"/>
</dbReference>
<dbReference type="GO" id="GO:0045089">
    <property type="term" value="P:positive regulation of innate immune response"/>
    <property type="evidence" value="ECO:0000250"/>
    <property type="project" value="UniProtKB"/>
</dbReference>
<dbReference type="GO" id="GO:0070430">
    <property type="term" value="P:positive regulation of nucleotide-binding oligomerization domain containing 1 signaling pathway"/>
    <property type="evidence" value="ECO:0000250"/>
    <property type="project" value="UniProtKB"/>
</dbReference>
<dbReference type="GO" id="GO:0070434">
    <property type="term" value="P:positive regulation of nucleotide-binding oligomerization domain containing 2 signaling pathway"/>
    <property type="evidence" value="ECO:0000250"/>
    <property type="project" value="UniProtKB"/>
</dbReference>
<dbReference type="GO" id="GO:0034157">
    <property type="term" value="P:positive regulation of toll-like receptor 7 signaling pathway"/>
    <property type="evidence" value="ECO:0000250"/>
    <property type="project" value="UniProtKB"/>
</dbReference>
<dbReference type="GO" id="GO:0034161">
    <property type="term" value="P:positive regulation of toll-like receptor 8 signaling pathway"/>
    <property type="evidence" value="ECO:0000250"/>
    <property type="project" value="UniProtKB"/>
</dbReference>
<dbReference type="GO" id="GO:0034165">
    <property type="term" value="P:positive regulation of toll-like receptor 9 signaling pathway"/>
    <property type="evidence" value="ECO:0000250"/>
    <property type="project" value="UniProtKB"/>
</dbReference>
<dbReference type="GO" id="GO:0015031">
    <property type="term" value="P:protein transport"/>
    <property type="evidence" value="ECO:0007669"/>
    <property type="project" value="UniProtKB-KW"/>
</dbReference>
<dbReference type="GO" id="GO:0048302">
    <property type="term" value="P:regulation of isotype switching to IgG isotypes"/>
    <property type="evidence" value="ECO:0000250"/>
    <property type="project" value="UniProtKB"/>
</dbReference>
<dbReference type="GO" id="GO:0070424">
    <property type="term" value="P:regulation of nucleotide-binding domain, leucine rich repeat containing receptor signaling pathway"/>
    <property type="evidence" value="ECO:0000250"/>
    <property type="project" value="UniProtKB"/>
</dbReference>
<dbReference type="CDD" id="cd17348">
    <property type="entry name" value="MFS_SLC15A3_4"/>
    <property type="match status" value="1"/>
</dbReference>
<dbReference type="FunFam" id="1.20.1250.20:FF:000212">
    <property type="entry name" value="Solute carrier family 15 member 4"/>
    <property type="match status" value="1"/>
</dbReference>
<dbReference type="Gene3D" id="1.20.1250.20">
    <property type="entry name" value="MFS general substrate transporter like domains"/>
    <property type="match status" value="1"/>
</dbReference>
<dbReference type="InterPro" id="IPR036259">
    <property type="entry name" value="MFS_trans_sf"/>
</dbReference>
<dbReference type="InterPro" id="IPR000109">
    <property type="entry name" value="POT_fam"/>
</dbReference>
<dbReference type="InterPro" id="IPR018456">
    <property type="entry name" value="PTR2_symporter_CS"/>
</dbReference>
<dbReference type="PANTHER" id="PTHR11654">
    <property type="entry name" value="OLIGOPEPTIDE TRANSPORTER-RELATED"/>
    <property type="match status" value="1"/>
</dbReference>
<dbReference type="Pfam" id="PF00854">
    <property type="entry name" value="PTR2"/>
    <property type="match status" value="1"/>
</dbReference>
<dbReference type="SUPFAM" id="SSF103473">
    <property type="entry name" value="MFS general substrate transporter"/>
    <property type="match status" value="1"/>
</dbReference>
<dbReference type="PROSITE" id="PS01023">
    <property type="entry name" value="PTR2_2"/>
    <property type="match status" value="1"/>
</dbReference>
<protein>
    <recommendedName>
        <fullName evidence="6">Solute carrier family 15 member 4</fullName>
    </recommendedName>
</protein>
<accession>Q68F72</accession>
<organism>
    <name type="scientific">Xenopus laevis</name>
    <name type="common">African clawed frog</name>
    <dbReference type="NCBI Taxonomy" id="8355"/>
    <lineage>
        <taxon>Eukaryota</taxon>
        <taxon>Metazoa</taxon>
        <taxon>Chordata</taxon>
        <taxon>Craniata</taxon>
        <taxon>Vertebrata</taxon>
        <taxon>Euteleostomi</taxon>
        <taxon>Amphibia</taxon>
        <taxon>Batrachia</taxon>
        <taxon>Anura</taxon>
        <taxon>Pipoidea</taxon>
        <taxon>Pipidae</taxon>
        <taxon>Xenopodinae</taxon>
        <taxon>Xenopus</taxon>
        <taxon>Xenopus</taxon>
    </lineage>
</organism>
<name>S15A4_XENLA</name>
<gene>
    <name evidence="2" type="primary">slc15a4</name>
</gene>
<comment type="function">
    <text evidence="1 2">Proton-coupled amino-acid transporter that mediates the transmembrane transport of L-histidine and some di- and tripeptides from inside the lysosome to the cytosol, and plays a key role in innate immune response. Able to transport a variety of di- and tripeptides, including carnosine and some peptidoglycans (By similarity). Transporter activity is pH-dependent and maximized in the acidic lysosomal environment (By similarity).</text>
</comment>
<comment type="catalytic activity">
    <reaction evidence="2">
        <text>glycylglycylglycine(out) + n H(+)(out) = glycylglycylglycine(in) + n H(+)(in)</text>
        <dbReference type="Rhea" id="RHEA:76391"/>
        <dbReference type="ChEBI" id="CHEBI:15378"/>
        <dbReference type="ChEBI" id="CHEBI:195214"/>
    </reaction>
    <physiologicalReaction direction="left-to-right" evidence="2">
        <dbReference type="Rhea" id="RHEA:76392"/>
    </physiologicalReaction>
</comment>
<comment type="catalytic activity">
    <reaction evidence="2">
        <text>N-acetyl-D-muramoyl-L-alanyl-D-isoglutamine(out) + n H(+)(out) = N-acetyl-D-muramoyl-L-alanyl-D-isoglutamine(in) + n H(+)(in)</text>
        <dbReference type="Rhea" id="RHEA:76371"/>
        <dbReference type="ChEBI" id="CHEBI:15378"/>
        <dbReference type="ChEBI" id="CHEBI:155830"/>
    </reaction>
    <physiologicalReaction direction="left-to-right" evidence="2">
        <dbReference type="Rhea" id="RHEA:76372"/>
    </physiologicalReaction>
</comment>
<comment type="catalytic activity">
    <reaction evidence="2">
        <text>L-alanyl-gamma-D-glutamyl-meso-2,6-diaminopimelate(out) + n H(+)(out) = L-alanyl-gamma-D-glutamyl-meso-2,6-diaminopimelate(in) + n H(+)(in)</text>
        <dbReference type="Rhea" id="RHEA:64412"/>
        <dbReference type="ChEBI" id="CHEBI:15378"/>
        <dbReference type="ChEBI" id="CHEBI:61401"/>
    </reaction>
    <physiologicalReaction direction="left-to-right" evidence="2">
        <dbReference type="Rhea" id="RHEA:64413"/>
    </physiologicalReaction>
</comment>
<comment type="catalytic activity">
    <reaction evidence="2">
        <text>carnosine(out) + n H(+)(out) = carnosine(in) + n H(+)(in)</text>
        <dbReference type="Rhea" id="RHEA:76383"/>
        <dbReference type="ChEBI" id="CHEBI:15378"/>
        <dbReference type="ChEBI" id="CHEBI:57485"/>
    </reaction>
    <physiologicalReaction direction="left-to-right" evidence="2">
        <dbReference type="Rhea" id="RHEA:76384"/>
    </physiologicalReaction>
</comment>
<comment type="catalytic activity">
    <reaction evidence="2">
        <text>L-histidine(out) + n H(+)(out) = L-histidine(in) + n H(+)(in)</text>
        <dbReference type="Rhea" id="RHEA:76379"/>
        <dbReference type="ChEBI" id="CHEBI:15378"/>
        <dbReference type="ChEBI" id="CHEBI:57595"/>
    </reaction>
    <physiologicalReaction direction="left-to-right" evidence="2">
        <dbReference type="Rhea" id="RHEA:76380"/>
    </physiologicalReaction>
</comment>
<comment type="subcellular location">
    <subcellularLocation>
        <location evidence="2">Lysosome membrane</location>
        <topology evidence="4">Multi-pass membrane protein</topology>
    </subcellularLocation>
    <subcellularLocation>
        <location evidence="2">Endosome membrane</location>
        <topology evidence="4">Multi-pass membrane protein</topology>
    </subcellularLocation>
    <subcellularLocation>
        <location evidence="3">Early endosome membrane</location>
        <topology evidence="4">Multi-pass membrane protein</topology>
    </subcellularLocation>
</comment>
<comment type="similarity">
    <text evidence="6">Belongs to the major facilitator superfamily. Proton-dependent oligopeptide transporter (POT/PTR) (TC 2.A.17) family.</text>
</comment>